<reference key="1">
    <citation type="journal article" date="1997" name="Nature">
        <title>Molecular basis of symbiosis between Rhizobium and legumes.</title>
        <authorList>
            <person name="Freiberg C.A."/>
            <person name="Fellay R."/>
            <person name="Bairoch A."/>
            <person name="Broughton W.J."/>
            <person name="Rosenthal A."/>
            <person name="Perret X."/>
        </authorList>
    </citation>
    <scope>NUCLEOTIDE SEQUENCE [LARGE SCALE GENOMIC DNA]</scope>
    <source>
        <strain>NBRC 101917 / NGR234</strain>
    </source>
</reference>
<reference key="2">
    <citation type="journal article" date="2009" name="Appl. Environ. Microbiol.">
        <title>Rhizobium sp. strain NGR234 possesses a remarkable number of secretion systems.</title>
        <authorList>
            <person name="Schmeisser C."/>
            <person name="Liesegang H."/>
            <person name="Krysciak D."/>
            <person name="Bakkou N."/>
            <person name="Le Quere A."/>
            <person name="Wollherr A."/>
            <person name="Heinemeyer I."/>
            <person name="Morgenstern B."/>
            <person name="Pommerening-Roeser A."/>
            <person name="Flores M."/>
            <person name="Palacios R."/>
            <person name="Brenner S."/>
            <person name="Gottschalk G."/>
            <person name="Schmitz R.A."/>
            <person name="Broughton W.J."/>
            <person name="Perret X."/>
            <person name="Strittmatter A.W."/>
            <person name="Streit W.R."/>
        </authorList>
    </citation>
    <scope>NUCLEOTIDE SEQUENCE [LARGE SCALE GENOMIC DNA]</scope>
    <source>
        <strain>NBRC 101917 / NGR234</strain>
    </source>
</reference>
<evidence type="ECO:0000250" key="1"/>
<evidence type="ECO:0000305" key="2"/>
<protein>
    <recommendedName>
        <fullName>Probable trehalose-phosphate phosphatase</fullName>
        <shortName>TPP</shortName>
        <ecNumber>3.1.3.12</ecNumber>
    </recommendedName>
    <alternativeName>
        <fullName>Trehalose 6-phosphate phosphatase</fullName>
    </alternativeName>
    <alternativeName>
        <fullName>Trehalose-phosphatase</fullName>
    </alternativeName>
</protein>
<keyword id="KW-0378">Hydrolase</keyword>
<keyword id="KW-0460">Magnesium</keyword>
<keyword id="KW-0479">Metal-binding</keyword>
<keyword id="KW-0614">Plasmid</keyword>
<keyword id="KW-1185">Reference proteome</keyword>
<feature type="chain" id="PRO_0000058101" description="Probable trehalose-phosphate phosphatase">
    <location>
        <begin position="1"/>
        <end position="265"/>
    </location>
</feature>
<feature type="active site" description="Nucleophile" evidence="1">
    <location>
        <position position="35"/>
    </location>
</feature>
<feature type="binding site" evidence="1">
    <location>
        <begin position="35"/>
        <end position="37"/>
    </location>
    <ligand>
        <name>substrate</name>
    </ligand>
</feature>
<feature type="binding site" evidence="1">
    <location>
        <position position="35"/>
    </location>
    <ligand>
        <name>Mg(2+)</name>
        <dbReference type="ChEBI" id="CHEBI:18420"/>
    </ligand>
</feature>
<feature type="binding site" evidence="1">
    <location>
        <position position="37"/>
    </location>
    <ligand>
        <name>Mg(2+)</name>
        <dbReference type="ChEBI" id="CHEBI:18420"/>
    </ligand>
</feature>
<feature type="binding site" evidence="1">
    <location>
        <position position="213"/>
    </location>
    <ligand>
        <name>Mg(2+)</name>
        <dbReference type="ChEBI" id="CHEBI:18420"/>
    </ligand>
</feature>
<sequence length="265" mass="27958">MSCQTQLLSASEAALGEDFLSALSTDLDNWALFLDIDGTLLDLAETPDAVAVPPSLPASLDHLSKKLGGALALVTGRGLDYADQLFSPANFPIAGLHGAERRDPDGRVHKAAETADFERLKAELVAATASWAGVLIEDKGAAVAAHYRLAPDRQLELEQLMEWALYRAGPDWAIQHGKMVVEIRPARANKGDAVAAFLGQPPFAGRRAIAIGDDVTDEAMFRTVNRLGGLSIRIGPPVPASEALGSIPSAEALRGIIAALALLNI</sequence>
<name>OTSB_SINFN</name>
<gene>
    <name type="primary">otsB</name>
    <name type="ordered locus">NGR_a02100</name>
    <name type="ORF">y4pB</name>
</gene>
<proteinExistence type="inferred from homology"/>
<geneLocation type="plasmid">
    <name>sym pNGR234a</name>
</geneLocation>
<comment type="function">
    <text evidence="1">Removes the phosphate from trehalose 6-phosphate to produce free trehalose.</text>
</comment>
<comment type="catalytic activity">
    <reaction>
        <text>alpha,alpha-trehalose 6-phosphate + H2O = alpha,alpha-trehalose + phosphate</text>
        <dbReference type="Rhea" id="RHEA:23420"/>
        <dbReference type="ChEBI" id="CHEBI:15377"/>
        <dbReference type="ChEBI" id="CHEBI:16551"/>
        <dbReference type="ChEBI" id="CHEBI:43474"/>
        <dbReference type="ChEBI" id="CHEBI:58429"/>
        <dbReference type="EC" id="3.1.3.12"/>
    </reaction>
</comment>
<comment type="cofactor">
    <cofactor evidence="1">
        <name>Mg(2+)</name>
        <dbReference type="ChEBI" id="CHEBI:18420"/>
    </cofactor>
</comment>
<comment type="pathway">
    <text>Glycan biosynthesis; trehalose biosynthesis.</text>
</comment>
<comment type="similarity">
    <text evidence="2">Belongs to the trehalose phosphatase family.</text>
</comment>
<organism>
    <name type="scientific">Sinorhizobium fredii (strain NBRC 101917 / NGR234)</name>
    <dbReference type="NCBI Taxonomy" id="394"/>
    <lineage>
        <taxon>Bacteria</taxon>
        <taxon>Pseudomonadati</taxon>
        <taxon>Pseudomonadota</taxon>
        <taxon>Alphaproteobacteria</taxon>
        <taxon>Hyphomicrobiales</taxon>
        <taxon>Rhizobiaceae</taxon>
        <taxon>Sinorhizobium/Ensifer group</taxon>
        <taxon>Sinorhizobium</taxon>
    </lineage>
</organism>
<accession>P55611</accession>
<dbReference type="EC" id="3.1.3.12"/>
<dbReference type="EMBL" id="U00090">
    <property type="protein sequence ID" value="AAB91812.1"/>
    <property type="molecule type" value="Genomic_DNA"/>
</dbReference>
<dbReference type="RefSeq" id="NP_444015.1">
    <property type="nucleotide sequence ID" value="NC_000914.2"/>
</dbReference>
<dbReference type="RefSeq" id="WP_010875237.1">
    <property type="nucleotide sequence ID" value="NC_000914.2"/>
</dbReference>
<dbReference type="SMR" id="P55611"/>
<dbReference type="KEGG" id="rhi:NGR_a02100"/>
<dbReference type="PATRIC" id="fig|394.7.peg.221"/>
<dbReference type="eggNOG" id="COG1877">
    <property type="taxonomic scope" value="Bacteria"/>
</dbReference>
<dbReference type="HOGENOM" id="CLU_037265_2_0_5"/>
<dbReference type="OrthoDB" id="9814913at2"/>
<dbReference type="UniPathway" id="UPA00299"/>
<dbReference type="Proteomes" id="UP000001054">
    <property type="component" value="Plasmid pNGR234a"/>
</dbReference>
<dbReference type="GO" id="GO:0046872">
    <property type="term" value="F:metal ion binding"/>
    <property type="evidence" value="ECO:0007669"/>
    <property type="project" value="UniProtKB-KW"/>
</dbReference>
<dbReference type="GO" id="GO:0004805">
    <property type="term" value="F:trehalose-phosphatase activity"/>
    <property type="evidence" value="ECO:0007669"/>
    <property type="project" value="UniProtKB-EC"/>
</dbReference>
<dbReference type="GO" id="GO:0005992">
    <property type="term" value="P:trehalose biosynthetic process"/>
    <property type="evidence" value="ECO:0007669"/>
    <property type="project" value="UniProtKB-UniPathway"/>
</dbReference>
<dbReference type="CDD" id="cd01627">
    <property type="entry name" value="HAD_TPP"/>
    <property type="match status" value="1"/>
</dbReference>
<dbReference type="Gene3D" id="3.40.50.1000">
    <property type="entry name" value="HAD superfamily/HAD-like"/>
    <property type="match status" value="1"/>
</dbReference>
<dbReference type="Gene3D" id="3.30.70.1020">
    <property type="entry name" value="Trehalose-6-phosphate phosphatase related protein, domain 2"/>
    <property type="match status" value="1"/>
</dbReference>
<dbReference type="InterPro" id="IPR036412">
    <property type="entry name" value="HAD-like_sf"/>
</dbReference>
<dbReference type="InterPro" id="IPR006379">
    <property type="entry name" value="HAD-SF_hydro_IIB"/>
</dbReference>
<dbReference type="InterPro" id="IPR023214">
    <property type="entry name" value="HAD_sf"/>
</dbReference>
<dbReference type="InterPro" id="IPR044651">
    <property type="entry name" value="OTSB-like"/>
</dbReference>
<dbReference type="InterPro" id="IPR003337">
    <property type="entry name" value="Trehalose_PPase"/>
</dbReference>
<dbReference type="NCBIfam" id="TIGR01484">
    <property type="entry name" value="HAD-SF-IIB"/>
    <property type="match status" value="1"/>
</dbReference>
<dbReference type="NCBIfam" id="TIGR00685">
    <property type="entry name" value="T6PP"/>
    <property type="match status" value="1"/>
</dbReference>
<dbReference type="PANTHER" id="PTHR43768">
    <property type="entry name" value="TREHALOSE 6-PHOSPHATE PHOSPHATASE"/>
    <property type="match status" value="1"/>
</dbReference>
<dbReference type="PANTHER" id="PTHR43768:SF3">
    <property type="entry name" value="TREHALOSE 6-PHOSPHATE PHOSPHATASE"/>
    <property type="match status" value="1"/>
</dbReference>
<dbReference type="Pfam" id="PF02358">
    <property type="entry name" value="Trehalose_PPase"/>
    <property type="match status" value="1"/>
</dbReference>
<dbReference type="SUPFAM" id="SSF56784">
    <property type="entry name" value="HAD-like"/>
    <property type="match status" value="1"/>
</dbReference>